<sequence length="78" mass="8832">MSGLGIMVLTLLLLVFMATSHQDAGEKQATQRDAINVRRRRSITRRVDEECNEYCDDRNKECCGRTNGHPRCANVCFG</sequence>
<reference key="1">
    <citation type="journal article" date="2001" name="Mol. Biol. Evol.">
        <title>Mechanisms for evolving hypervariability: the case of conopeptides.</title>
        <authorList>
            <person name="Conticello S.G."/>
            <person name="Gilad Y."/>
            <person name="Avidan N."/>
            <person name="Ben-Asher E."/>
            <person name="Levy Z."/>
            <person name="Fainzilber M."/>
        </authorList>
    </citation>
    <scope>NUCLEOTIDE SEQUENCE [MRNA]</scope>
    <source>
        <tissue>Venom duct</tissue>
    </source>
</reference>
<keyword id="KW-0027">Amidation</keyword>
<keyword id="KW-0165">Cleavage on pair of basic residues</keyword>
<keyword id="KW-1015">Disulfide bond</keyword>
<keyword id="KW-0960">Knottin</keyword>
<keyword id="KW-0528">Neurotoxin</keyword>
<keyword id="KW-0964">Secreted</keyword>
<keyword id="KW-0732">Signal</keyword>
<keyword id="KW-0800">Toxin</keyword>
<proteinExistence type="evidence at transcript level"/>
<comment type="subcellular location">
    <subcellularLocation>
        <location evidence="1">Secreted</location>
    </subcellularLocation>
</comment>
<comment type="tissue specificity">
    <text>Expressed by the venom duct.</text>
</comment>
<comment type="domain">
    <text evidence="1">The presence of a 'disulfide through disulfide knot' structurally defines this protein as a knottin.</text>
</comment>
<comment type="domain">
    <text>The cysteine framework is VI/VII (C-C-CC-C-C).</text>
</comment>
<comment type="similarity">
    <text evidence="3">Belongs to the conotoxin O3 superfamily.</text>
</comment>
<name>O364_CONTS</name>
<feature type="signal peptide" evidence="2">
    <location>
        <begin position="1"/>
        <end position="24"/>
    </location>
</feature>
<feature type="propeptide" id="PRO_0000404862" evidence="1">
    <location>
        <begin position="25"/>
        <end position="44"/>
    </location>
</feature>
<feature type="peptide" id="PRO_0000404863" description="Conotoxin TsMSGL-11">
    <location>
        <begin position="47"/>
        <end position="77"/>
    </location>
</feature>
<feature type="modified residue" description="Phenylalanine amide" evidence="1">
    <location>
        <position position="77"/>
    </location>
</feature>
<feature type="disulfide bond" evidence="1">
    <location>
        <begin position="51"/>
        <end position="63"/>
    </location>
</feature>
<feature type="disulfide bond" evidence="1">
    <location>
        <begin position="55"/>
        <end position="72"/>
    </location>
</feature>
<feature type="disulfide bond" evidence="1">
    <location>
        <begin position="62"/>
        <end position="76"/>
    </location>
</feature>
<evidence type="ECO:0000250" key="1"/>
<evidence type="ECO:0000255" key="2"/>
<evidence type="ECO:0000305" key="3"/>
<organism>
    <name type="scientific">Conus tessulatus</name>
    <name type="common">Tessellate cone</name>
    <dbReference type="NCBI Taxonomy" id="101317"/>
    <lineage>
        <taxon>Eukaryota</taxon>
        <taxon>Metazoa</taxon>
        <taxon>Spiralia</taxon>
        <taxon>Lophotrochozoa</taxon>
        <taxon>Mollusca</taxon>
        <taxon>Gastropoda</taxon>
        <taxon>Caenogastropoda</taxon>
        <taxon>Neogastropoda</taxon>
        <taxon>Conoidea</taxon>
        <taxon>Conidae</taxon>
        <taxon>Conus</taxon>
        <taxon>Tesselliconus</taxon>
    </lineage>
</organism>
<accession>Q9BP76</accession>
<protein>
    <recommendedName>
        <fullName>Conotoxin TsMSGL-11</fullName>
    </recommendedName>
</protein>
<dbReference type="EMBL" id="AF215062">
    <property type="protein sequence ID" value="AAG60490.1"/>
    <property type="molecule type" value="mRNA"/>
</dbReference>
<dbReference type="SMR" id="Q9BP76"/>
<dbReference type="ConoServer" id="749">
    <property type="toxin name" value="Ts6.4 precursor"/>
</dbReference>
<dbReference type="GO" id="GO:0005576">
    <property type="term" value="C:extracellular region"/>
    <property type="evidence" value="ECO:0007669"/>
    <property type="project" value="UniProtKB-SubCell"/>
</dbReference>
<dbReference type="GO" id="GO:0008200">
    <property type="term" value="F:ion channel inhibitor activity"/>
    <property type="evidence" value="ECO:0007669"/>
    <property type="project" value="InterPro"/>
</dbReference>
<dbReference type="GO" id="GO:0090729">
    <property type="term" value="F:toxin activity"/>
    <property type="evidence" value="ECO:0007669"/>
    <property type="project" value="UniProtKB-KW"/>
</dbReference>
<dbReference type="InterPro" id="IPR004214">
    <property type="entry name" value="Conotoxin"/>
</dbReference>
<dbReference type="Pfam" id="PF02950">
    <property type="entry name" value="Conotoxin"/>
    <property type="match status" value="1"/>
</dbReference>